<evidence type="ECO:0000250" key="1"/>
<evidence type="ECO:0000250" key="2">
    <source>
        <dbReference type="UniProtKB" id="Q9FHE4"/>
    </source>
</evidence>
<evidence type="ECO:0000255" key="3"/>
<evidence type="ECO:0000255" key="4">
    <source>
        <dbReference type="PROSITE-ProRule" id="PRU00175"/>
    </source>
</evidence>
<evidence type="ECO:0000269" key="5">
    <source>
    </source>
</evidence>
<evidence type="ECO:0000269" key="6">
    <source>
    </source>
</evidence>
<evidence type="ECO:0000303" key="7">
    <source ref="4"/>
</evidence>
<evidence type="ECO:0000305" key="8"/>
<protein>
    <recommendedName>
        <fullName>Probable BOI-related E3 ubiquitin-protein ligase 2</fullName>
        <ecNumber evidence="2">2.3.2.27</ecNumber>
    </recommendedName>
    <alternativeName>
        <fullName evidence="8">RING-type E3 ubiquitin transferase BRG2</fullName>
    </alternativeName>
</protein>
<reference key="1">
    <citation type="journal article" date="2000" name="Nature">
        <title>Sequence and analysis of chromosome 1 of the plant Arabidopsis thaliana.</title>
        <authorList>
            <person name="Theologis A."/>
            <person name="Ecker J.R."/>
            <person name="Palm C.J."/>
            <person name="Federspiel N.A."/>
            <person name="Kaul S."/>
            <person name="White O."/>
            <person name="Alonso J."/>
            <person name="Altafi H."/>
            <person name="Araujo R."/>
            <person name="Bowman C.L."/>
            <person name="Brooks S.Y."/>
            <person name="Buehler E."/>
            <person name="Chan A."/>
            <person name="Chao Q."/>
            <person name="Chen H."/>
            <person name="Cheuk R.F."/>
            <person name="Chin C.W."/>
            <person name="Chung M.K."/>
            <person name="Conn L."/>
            <person name="Conway A.B."/>
            <person name="Conway A.R."/>
            <person name="Creasy T.H."/>
            <person name="Dewar K."/>
            <person name="Dunn P."/>
            <person name="Etgu P."/>
            <person name="Feldblyum T.V."/>
            <person name="Feng J.-D."/>
            <person name="Fong B."/>
            <person name="Fujii C.Y."/>
            <person name="Gill J.E."/>
            <person name="Goldsmith A.D."/>
            <person name="Haas B."/>
            <person name="Hansen N.F."/>
            <person name="Hughes B."/>
            <person name="Huizar L."/>
            <person name="Hunter J.L."/>
            <person name="Jenkins J."/>
            <person name="Johnson-Hopson C."/>
            <person name="Khan S."/>
            <person name="Khaykin E."/>
            <person name="Kim C.J."/>
            <person name="Koo H.L."/>
            <person name="Kremenetskaia I."/>
            <person name="Kurtz D.B."/>
            <person name="Kwan A."/>
            <person name="Lam B."/>
            <person name="Langin-Hooper S."/>
            <person name="Lee A."/>
            <person name="Lee J.M."/>
            <person name="Lenz C.A."/>
            <person name="Li J.H."/>
            <person name="Li Y.-P."/>
            <person name="Lin X."/>
            <person name="Liu S.X."/>
            <person name="Liu Z.A."/>
            <person name="Luros J.S."/>
            <person name="Maiti R."/>
            <person name="Marziali A."/>
            <person name="Militscher J."/>
            <person name="Miranda M."/>
            <person name="Nguyen M."/>
            <person name="Nierman W.C."/>
            <person name="Osborne B.I."/>
            <person name="Pai G."/>
            <person name="Peterson J."/>
            <person name="Pham P.K."/>
            <person name="Rizzo M."/>
            <person name="Rooney T."/>
            <person name="Rowley D."/>
            <person name="Sakano H."/>
            <person name="Salzberg S.L."/>
            <person name="Schwartz J.R."/>
            <person name="Shinn P."/>
            <person name="Southwick A.M."/>
            <person name="Sun H."/>
            <person name="Tallon L.J."/>
            <person name="Tambunga G."/>
            <person name="Toriumi M.J."/>
            <person name="Town C.D."/>
            <person name="Utterback T."/>
            <person name="Van Aken S."/>
            <person name="Vaysberg M."/>
            <person name="Vysotskaia V.S."/>
            <person name="Walker M."/>
            <person name="Wu D."/>
            <person name="Yu G."/>
            <person name="Fraser C.M."/>
            <person name="Venter J.C."/>
            <person name="Davis R.W."/>
        </authorList>
    </citation>
    <scope>NUCLEOTIDE SEQUENCE [LARGE SCALE GENOMIC DNA]</scope>
    <source>
        <strain>cv. Columbia</strain>
    </source>
</reference>
<reference key="2">
    <citation type="journal article" date="2017" name="Plant J.">
        <title>Araport11: a complete reannotation of the Arabidopsis thaliana reference genome.</title>
        <authorList>
            <person name="Cheng C.Y."/>
            <person name="Krishnakumar V."/>
            <person name="Chan A.P."/>
            <person name="Thibaud-Nissen F."/>
            <person name="Schobel S."/>
            <person name="Town C.D."/>
        </authorList>
    </citation>
    <scope>GENOME REANNOTATION</scope>
    <source>
        <strain>cv. Columbia</strain>
    </source>
</reference>
<reference key="3">
    <citation type="submission" date="2002-03" db="EMBL/GenBank/DDBJ databases">
        <title>Full-length cDNA from Arabidopsis thaliana.</title>
        <authorList>
            <person name="Brover V.V."/>
            <person name="Troukhan M.E."/>
            <person name="Alexandrov N.A."/>
            <person name="Lu Y.-P."/>
            <person name="Flavell R.B."/>
            <person name="Feldmann K.A."/>
        </authorList>
    </citation>
    <scope>NUCLEOTIDE SEQUENCE [LARGE SCALE MRNA] (ISOFORM 1)</scope>
</reference>
<reference key="4">
    <citation type="submission" date="2006-07" db="EMBL/GenBank/DDBJ databases">
        <title>Large-scale analysis of RIKEN Arabidopsis full-length (RAFL) cDNAs.</title>
        <authorList>
            <person name="Totoki Y."/>
            <person name="Seki M."/>
            <person name="Ishida J."/>
            <person name="Nakajima M."/>
            <person name="Enju A."/>
            <person name="Kamiya A."/>
            <person name="Narusaka M."/>
            <person name="Shin-i T."/>
            <person name="Nakagawa M."/>
            <person name="Sakamoto N."/>
            <person name="Oishi K."/>
            <person name="Kohara Y."/>
            <person name="Kobayashi M."/>
            <person name="Toyoda A."/>
            <person name="Sakaki Y."/>
            <person name="Sakurai T."/>
            <person name="Iida K."/>
            <person name="Akiyama K."/>
            <person name="Satou M."/>
            <person name="Toyoda T."/>
            <person name="Konagaya A."/>
            <person name="Carninci P."/>
            <person name="Kawai J."/>
            <person name="Hayashizaki Y."/>
            <person name="Shinozaki K."/>
        </authorList>
    </citation>
    <scope>NUCLEOTIDE SEQUENCE [LARGE SCALE MRNA] (ISOFORM 2)</scope>
    <source>
        <strain>cv. Columbia</strain>
    </source>
</reference>
<reference key="5">
    <citation type="journal article" date="2010" name="Plant Physiol.">
        <title>The Arabidopsis Botrytis Susceptible1 Interactor defines a subclass of RING E3 ligases that regulate pathogen and stress responses.</title>
        <authorList>
            <person name="Luo H."/>
            <person name="Laluk K."/>
            <person name="Lai Z."/>
            <person name="Veronese P."/>
            <person name="Song F."/>
            <person name="Mengiste T."/>
        </authorList>
    </citation>
    <scope>IDENTIFICATION</scope>
    <scope>INDUCTION BY PATHOGEN; SALICYLIC ACID; GIBBERELLIC ACID; ACC; METHYL JASMONATE AND SALT</scope>
    <scope>DISRUPTION PHENOTYPE</scope>
</reference>
<reference key="6">
    <citation type="journal article" date="2013" name="Plant Cell">
        <title>DELLA proteins and their interacting RING Finger proteins repress gibberellin responses by binding to the promoters of a subset of gibberellin-responsive genes in Arabidopsis.</title>
        <authorList>
            <person name="Park J."/>
            <person name="Nguyen K.T."/>
            <person name="Park E."/>
            <person name="Jeon J.S."/>
            <person name="Choi G."/>
        </authorList>
    </citation>
    <scope>FUNCTION</scope>
    <scope>INTERACTION WITH GAI; RGA; RGL1; RGL2 AND RGL3</scope>
    <scope>DISRUPTION PHENOTYPE</scope>
</reference>
<sequence>MAVDAHHLFLSPPQLFSNRELTMNNNTMEPTSGGFCNNNQTGYGVVSPFSVPNHTSTTTTATPPLLHVYGGSDTIPTTAGYYADGATNLDCEFFPLPTRKRSRDSSRSNYHHLLLQNPRSSSCVNAATTTTTTTLFSFLGQDIDISSHMNQQQHEIDRFVSLHLYQMERVKYEIEEKRKRQARTIMEAIEQGLVKRLRVKEEERERIGKVNHALEERVKSLSIENQIWRDLAQTNEATANHLRTNLEHVLAQVKDVSRGAGLEKNMNEEDDAESCCGSSCGGGGEETVRRRVGLEREAQDKAERRRRRMCRNCGEEESCVLLLPCRHLCLCGVCGSSVHTCPICTSPKNASVHVNMSS</sequence>
<comment type="function">
    <text evidence="6">Probable E3 ubiquitin-protein ligase. Has no effect on the stability of the DELLA proteins.</text>
</comment>
<comment type="catalytic activity">
    <reaction evidence="2">
        <text>S-ubiquitinyl-[E2 ubiquitin-conjugating enzyme]-L-cysteine + [acceptor protein]-L-lysine = [E2 ubiquitin-conjugating enzyme]-L-cysteine + N(6)-ubiquitinyl-[acceptor protein]-L-lysine.</text>
        <dbReference type="EC" id="2.3.2.27"/>
    </reaction>
</comment>
<comment type="pathway">
    <text>Protein degradation; proteasomal ubiquitin-dependent pathway.</text>
</comment>
<comment type="subunit">
    <text evidence="6">Interacts with the DELLA proteins GAI, RGA, RGL1, RGL2 and RGL3.</text>
</comment>
<comment type="alternative products">
    <event type="alternative splicing"/>
    <isoform>
        <id>F4IDI6-1</id>
        <name>1</name>
        <sequence type="displayed"/>
    </isoform>
    <isoform>
        <id>F4IDI6-2</id>
        <name>2</name>
        <sequence type="described" ref="VSP_053491"/>
    </isoform>
</comment>
<comment type="induction">
    <text evidence="5">Down-regulated by pathogen and salicylic acid. Up-regulated by salt, gibberellic acid and methyl jasmonate. Not regulated by 1-aminocyclopropane-1-carboxylic acid (ACC).</text>
</comment>
<comment type="domain">
    <text evidence="1">The RING-type zinc finger domain mediates binding to an E2 ubiquitin-conjugating enzyme.</text>
</comment>
<comment type="disruption phenotype">
    <text evidence="5 6">No visible phenotype. Decreased resistance to B.cinerea and increased cell death upon pathogen infection. Boi, brg1, brg2 and brg3 quadruple mutant shows a higher GA signaling resulting in a higher seed germination in the presence of paclobutrazol, precocious juvenile-to-adult phase transition and early flowering.</text>
</comment>
<comment type="sequence caution" evidence="8">
    <conflict type="erroneous gene model prediction">
        <sequence resource="EMBL-CDS" id="AAC17064"/>
    </conflict>
</comment>
<feature type="chain" id="PRO_0000424718" description="Probable BOI-related E3 ubiquitin-protein ligase 2">
    <location>
        <begin position="1"/>
        <end position="358"/>
    </location>
</feature>
<feature type="zinc finger region" description="RING-type" evidence="4">
    <location>
        <begin position="310"/>
        <end position="345"/>
    </location>
</feature>
<feature type="region of interest" description="WRD domain">
    <location>
        <begin position="214"/>
        <end position="250"/>
    </location>
</feature>
<feature type="coiled-coil region" evidence="3">
    <location>
        <begin position="171"/>
        <end position="234"/>
    </location>
</feature>
<feature type="splice variant" id="VSP_053491" description="In isoform 2." evidence="7">
    <location>
        <begin position="164"/>
        <end position="166"/>
    </location>
</feature>
<feature type="sequence conflict" description="In Ref. 4; BAF01778/BAF01934." evidence="8" ref="4">
    <original>V</original>
    <variation>A</variation>
    <location>
        <position position="51"/>
    </location>
</feature>
<feature type="sequence conflict" description="In Ref. 3; AAM65075." evidence="8" ref="3">
    <original>V</original>
    <variation>M</variation>
    <location>
        <position position="68"/>
    </location>
</feature>
<feature type="sequence conflict" description="In Ref. 3; AAM65075." evidence="8" ref="3">
    <original>L</original>
    <variation>P</variation>
    <location>
        <position position="135"/>
    </location>
</feature>
<feature type="sequence conflict" description="In Ref. 4; BAF01861." evidence="8" ref="4">
    <original>R</original>
    <variation>G</variation>
    <location>
        <position position="183"/>
    </location>
</feature>
<dbReference type="EC" id="2.3.2.27" evidence="2"/>
<dbReference type="EMBL" id="AC002986">
    <property type="protein sequence ID" value="AAC17064.1"/>
    <property type="status" value="ALT_SEQ"/>
    <property type="molecule type" value="Genomic_DNA"/>
</dbReference>
<dbReference type="EMBL" id="CP002684">
    <property type="protein sequence ID" value="AEE36205.1"/>
    <property type="molecule type" value="Genomic_DNA"/>
</dbReference>
<dbReference type="EMBL" id="CP002684">
    <property type="protein sequence ID" value="AEE36206.1"/>
    <property type="molecule type" value="Genomic_DNA"/>
</dbReference>
<dbReference type="EMBL" id="AY087533">
    <property type="protein sequence ID" value="AAM65075.1"/>
    <property type="molecule type" value="mRNA"/>
</dbReference>
<dbReference type="EMBL" id="AK229952">
    <property type="protein sequence ID" value="BAF01778.1"/>
    <property type="molecule type" value="mRNA"/>
</dbReference>
<dbReference type="EMBL" id="AK230118">
    <property type="protein sequence ID" value="BAF01934.1"/>
    <property type="molecule type" value="mRNA"/>
</dbReference>
<dbReference type="EMBL" id="AK230039">
    <property type="protein sequence ID" value="BAF01861.1"/>
    <property type="molecule type" value="mRNA"/>
</dbReference>
<dbReference type="PIR" id="T01044">
    <property type="entry name" value="T01044"/>
</dbReference>
<dbReference type="RefSeq" id="NP_565200.1">
    <molecule id="F4IDI6-1"/>
    <property type="nucleotide sequence ID" value="NM_106562.2"/>
</dbReference>
<dbReference type="RefSeq" id="NP_974174.1">
    <molecule id="F4IDI6-2"/>
    <property type="nucleotide sequence ID" value="NM_202445.3"/>
</dbReference>
<dbReference type="BioGRID" id="29471">
    <property type="interactions" value="1"/>
</dbReference>
<dbReference type="FunCoup" id="F4IDI6">
    <property type="interactions" value="160"/>
</dbReference>
<dbReference type="STRING" id="3702.F4IDI6"/>
<dbReference type="PaxDb" id="3702-AT1G79110.1"/>
<dbReference type="EnsemblPlants" id="AT1G79110.1">
    <molecule id="F4IDI6-1"/>
    <property type="protein sequence ID" value="AT1G79110.1"/>
    <property type="gene ID" value="AT1G79110"/>
</dbReference>
<dbReference type="EnsemblPlants" id="AT1G79110.2">
    <molecule id="F4IDI6-2"/>
    <property type="protein sequence ID" value="AT1G79110.2"/>
    <property type="gene ID" value="AT1G79110"/>
</dbReference>
<dbReference type="GeneID" id="844252"/>
<dbReference type="Gramene" id="AT1G79110.1">
    <molecule id="F4IDI6-1"/>
    <property type="protein sequence ID" value="AT1G79110.1"/>
    <property type="gene ID" value="AT1G79110"/>
</dbReference>
<dbReference type="Gramene" id="AT1G79110.2">
    <molecule id="F4IDI6-2"/>
    <property type="protein sequence ID" value="AT1G79110.2"/>
    <property type="gene ID" value="AT1G79110"/>
</dbReference>
<dbReference type="KEGG" id="ath:AT1G79110"/>
<dbReference type="Araport" id="AT1G79110"/>
<dbReference type="TAIR" id="AT1G79110">
    <property type="gene designation" value="BRG2"/>
</dbReference>
<dbReference type="eggNOG" id="KOG1100">
    <property type="taxonomic scope" value="Eukaryota"/>
</dbReference>
<dbReference type="HOGENOM" id="CLU_038018_3_1_1"/>
<dbReference type="InParanoid" id="F4IDI6"/>
<dbReference type="UniPathway" id="UPA00144"/>
<dbReference type="PRO" id="PR:F4IDI6"/>
<dbReference type="Proteomes" id="UP000006548">
    <property type="component" value="Chromosome 1"/>
</dbReference>
<dbReference type="ExpressionAtlas" id="F4IDI6">
    <property type="expression patterns" value="baseline and differential"/>
</dbReference>
<dbReference type="GO" id="GO:0016740">
    <property type="term" value="F:transferase activity"/>
    <property type="evidence" value="ECO:0007669"/>
    <property type="project" value="UniProtKB-KW"/>
</dbReference>
<dbReference type="GO" id="GO:0008270">
    <property type="term" value="F:zinc ion binding"/>
    <property type="evidence" value="ECO:0007669"/>
    <property type="project" value="UniProtKB-KW"/>
</dbReference>
<dbReference type="GO" id="GO:0006952">
    <property type="term" value="P:defense response"/>
    <property type="evidence" value="ECO:0007669"/>
    <property type="project" value="UniProtKB-KW"/>
</dbReference>
<dbReference type="GO" id="GO:0043161">
    <property type="term" value="P:proteasome-mediated ubiquitin-dependent protein catabolic process"/>
    <property type="evidence" value="ECO:0007669"/>
    <property type="project" value="UniProtKB-UniPathway"/>
</dbReference>
<dbReference type="GO" id="GO:0043067">
    <property type="term" value="P:regulation of programmed cell death"/>
    <property type="evidence" value="ECO:0000315"/>
    <property type="project" value="TAIR"/>
</dbReference>
<dbReference type="CDD" id="cd16649">
    <property type="entry name" value="mRING-HC-C3HC5_CGRF1-like"/>
    <property type="match status" value="1"/>
</dbReference>
<dbReference type="FunFam" id="3.30.40.10:FF:000541">
    <property type="entry name" value="BOI-related E3 ubiquitin-protein ligase 1"/>
    <property type="match status" value="1"/>
</dbReference>
<dbReference type="Gene3D" id="3.30.40.10">
    <property type="entry name" value="Zinc/RING finger domain, C3HC4 (zinc finger)"/>
    <property type="match status" value="1"/>
</dbReference>
<dbReference type="InterPro" id="IPR001841">
    <property type="entry name" value="Znf_RING"/>
</dbReference>
<dbReference type="InterPro" id="IPR013083">
    <property type="entry name" value="Znf_RING/FYVE/PHD"/>
</dbReference>
<dbReference type="PANTHER" id="PTHR42647:SF12">
    <property type="entry name" value="BOI-RELATED E3 UBIQUITIN-PROTEIN LIGASE 2-RELATED"/>
    <property type="match status" value="1"/>
</dbReference>
<dbReference type="PANTHER" id="PTHR42647">
    <property type="entry name" value="SBP (S-RIBONUCLEASE BINDING PROTEIN) FAMILY PROTEIN"/>
    <property type="match status" value="1"/>
</dbReference>
<dbReference type="Pfam" id="PF13920">
    <property type="entry name" value="zf-C3HC4_3"/>
    <property type="match status" value="1"/>
</dbReference>
<dbReference type="PROSITE" id="PS50089">
    <property type="entry name" value="ZF_RING_2"/>
    <property type="match status" value="1"/>
</dbReference>
<gene>
    <name type="primary">BRG2</name>
    <name type="ordered locus">At1g79110</name>
    <name type="ORF">YUP8H12R.27</name>
</gene>
<name>BRG2_ARATH</name>
<keyword id="KW-0025">Alternative splicing</keyword>
<keyword id="KW-0175">Coiled coil</keyword>
<keyword id="KW-0479">Metal-binding</keyword>
<keyword id="KW-0611">Plant defense</keyword>
<keyword id="KW-1185">Reference proteome</keyword>
<keyword id="KW-0808">Transferase</keyword>
<keyword id="KW-0833">Ubl conjugation pathway</keyword>
<keyword id="KW-0862">Zinc</keyword>
<keyword id="KW-0863">Zinc-finger</keyword>
<accession>F4IDI6</accession>
<accession>F4IDI7</accession>
<accession>O64540</accession>
<accession>Q0WLS3</accession>
<accession>Q0WLZ6</accession>
<accession>Q8LAY3</accession>
<proteinExistence type="evidence at protein level"/>
<organism>
    <name type="scientific">Arabidopsis thaliana</name>
    <name type="common">Mouse-ear cress</name>
    <dbReference type="NCBI Taxonomy" id="3702"/>
    <lineage>
        <taxon>Eukaryota</taxon>
        <taxon>Viridiplantae</taxon>
        <taxon>Streptophyta</taxon>
        <taxon>Embryophyta</taxon>
        <taxon>Tracheophyta</taxon>
        <taxon>Spermatophyta</taxon>
        <taxon>Magnoliopsida</taxon>
        <taxon>eudicotyledons</taxon>
        <taxon>Gunneridae</taxon>
        <taxon>Pentapetalae</taxon>
        <taxon>rosids</taxon>
        <taxon>malvids</taxon>
        <taxon>Brassicales</taxon>
        <taxon>Brassicaceae</taxon>
        <taxon>Camelineae</taxon>
        <taxon>Arabidopsis</taxon>
    </lineage>
</organism>